<keyword id="KW-0041">Annexin</keyword>
<keyword id="KW-0106">Calcium</keyword>
<keyword id="KW-0111">Calcium/phospholipid-binding</keyword>
<keyword id="KW-0963">Cytoplasm</keyword>
<keyword id="KW-1185">Reference proteome</keyword>
<keyword id="KW-0677">Repeat</keyword>
<accession>P51901</accession>
<feature type="chain" id="PRO_0000067497" description="Annexin A6">
    <location>
        <begin position="1"/>
        <end position="671"/>
    </location>
</feature>
<feature type="repeat" description="Annexin 1" evidence="2">
    <location>
        <begin position="18"/>
        <end position="89"/>
    </location>
</feature>
<feature type="repeat" description="Annexin 2" evidence="2">
    <location>
        <begin position="90"/>
        <end position="161"/>
    </location>
</feature>
<feature type="repeat" description="Annexin 3" evidence="2">
    <location>
        <begin position="173"/>
        <end position="245"/>
    </location>
</feature>
<feature type="repeat" description="Annexin 4" evidence="2">
    <location>
        <begin position="249"/>
        <end position="320"/>
    </location>
</feature>
<feature type="repeat" description="Annexin 5" evidence="2">
    <location>
        <begin position="361"/>
        <end position="432"/>
    </location>
</feature>
<feature type="repeat" description="Annexin 6" evidence="2">
    <location>
        <begin position="433"/>
        <end position="504"/>
    </location>
</feature>
<feature type="repeat" description="Annexin 7" evidence="2">
    <location>
        <begin position="519"/>
        <end position="594"/>
    </location>
</feature>
<feature type="repeat" description="Annexin 8" evidence="2">
    <location>
        <begin position="598"/>
        <end position="669"/>
    </location>
</feature>
<reference key="1">
    <citation type="journal article" date="1993" name="Biochem. Biophys. Res. Commun.">
        <title>Characterization, cloning and expression of the 67-kDa annexin from chicken growth plate cartilage matrix vesicles.</title>
        <authorList>
            <person name="Cao X."/>
            <person name="Genge B.R."/>
            <person name="Wu L.N."/>
            <person name="Buzzi W.R."/>
            <person name="Showman R.M."/>
            <person name="Wuthier R.E."/>
        </authorList>
    </citation>
    <scope>NUCLEOTIDE SEQUENCE [MRNA]</scope>
</reference>
<dbReference type="EMBL" id="S67466">
    <property type="protein sequence ID" value="AAB29337.2"/>
    <property type="molecule type" value="mRNA"/>
</dbReference>
<dbReference type="PIR" id="JC2029">
    <property type="entry name" value="JC2029"/>
</dbReference>
<dbReference type="PIR" id="S08990">
    <property type="entry name" value="S08990"/>
</dbReference>
<dbReference type="RefSeq" id="NP_990061.1">
    <property type="nucleotide sequence ID" value="NM_204730.1"/>
</dbReference>
<dbReference type="SMR" id="P51901"/>
<dbReference type="FunCoup" id="P51901">
    <property type="interactions" value="1925"/>
</dbReference>
<dbReference type="STRING" id="9031.ENSGALP00000057916"/>
<dbReference type="PaxDb" id="9031-ENSGALP00000006939"/>
<dbReference type="GeneID" id="395481"/>
<dbReference type="KEGG" id="gga:395481"/>
<dbReference type="CTD" id="309"/>
<dbReference type="VEuPathDB" id="HostDB:geneid_395481"/>
<dbReference type="eggNOG" id="KOG0819">
    <property type="taxonomic scope" value="Eukaryota"/>
</dbReference>
<dbReference type="InParanoid" id="P51901"/>
<dbReference type="OrthoDB" id="37886at2759"/>
<dbReference type="PhylomeDB" id="P51901"/>
<dbReference type="PRO" id="PR:P51901"/>
<dbReference type="Proteomes" id="UP000000539">
    <property type="component" value="Unassembled WGS sequence"/>
</dbReference>
<dbReference type="GO" id="GO:0034704">
    <property type="term" value="C:calcium channel complex"/>
    <property type="evidence" value="ECO:0000304"/>
    <property type="project" value="AgBase"/>
</dbReference>
<dbReference type="GO" id="GO:0005737">
    <property type="term" value="C:cytoplasm"/>
    <property type="evidence" value="ECO:0000318"/>
    <property type="project" value="GO_Central"/>
</dbReference>
<dbReference type="GO" id="GO:0042470">
    <property type="term" value="C:melanosome"/>
    <property type="evidence" value="ECO:0007669"/>
    <property type="project" value="UniProtKB-SubCell"/>
</dbReference>
<dbReference type="GO" id="GO:0005739">
    <property type="term" value="C:mitochondrion"/>
    <property type="evidence" value="ECO:0007669"/>
    <property type="project" value="GOC"/>
</dbReference>
<dbReference type="GO" id="GO:0005634">
    <property type="term" value="C:nucleus"/>
    <property type="evidence" value="ECO:0000318"/>
    <property type="project" value="GO_Central"/>
</dbReference>
<dbReference type="GO" id="GO:0005886">
    <property type="term" value="C:plasma membrane"/>
    <property type="evidence" value="ECO:0000318"/>
    <property type="project" value="GO_Central"/>
</dbReference>
<dbReference type="GO" id="GO:0031982">
    <property type="term" value="C:vesicle"/>
    <property type="evidence" value="ECO:0000304"/>
    <property type="project" value="AgBase"/>
</dbReference>
<dbReference type="GO" id="GO:0012506">
    <property type="term" value="C:vesicle membrane"/>
    <property type="evidence" value="ECO:0000318"/>
    <property type="project" value="GO_Central"/>
</dbReference>
<dbReference type="GO" id="GO:0005262">
    <property type="term" value="F:calcium channel activity"/>
    <property type="evidence" value="ECO:0000304"/>
    <property type="project" value="AgBase"/>
</dbReference>
<dbReference type="GO" id="GO:0005509">
    <property type="term" value="F:calcium ion binding"/>
    <property type="evidence" value="ECO:0007669"/>
    <property type="project" value="InterPro"/>
</dbReference>
<dbReference type="GO" id="GO:0005544">
    <property type="term" value="F:calcium-dependent phospholipid binding"/>
    <property type="evidence" value="ECO:0000318"/>
    <property type="project" value="GO_Central"/>
</dbReference>
<dbReference type="GO" id="GO:0001786">
    <property type="term" value="F:phosphatidylserine binding"/>
    <property type="evidence" value="ECO:0000318"/>
    <property type="project" value="GO_Central"/>
</dbReference>
<dbReference type="GO" id="GO:0097190">
    <property type="term" value="P:apoptotic signaling pathway"/>
    <property type="evidence" value="ECO:0000318"/>
    <property type="project" value="GO_Central"/>
</dbReference>
<dbReference type="GO" id="GO:0055074">
    <property type="term" value="P:calcium ion homeostasis"/>
    <property type="evidence" value="ECO:0000304"/>
    <property type="project" value="AgBase"/>
</dbReference>
<dbReference type="GO" id="GO:0006816">
    <property type="term" value="P:calcium ion transport"/>
    <property type="evidence" value="ECO:0000318"/>
    <property type="project" value="GO_Central"/>
</dbReference>
<dbReference type="GO" id="GO:0051560">
    <property type="term" value="P:mitochondrial calcium ion homeostasis"/>
    <property type="evidence" value="ECO:0000318"/>
    <property type="project" value="GO_Central"/>
</dbReference>
<dbReference type="GO" id="GO:0051283">
    <property type="term" value="P:negative regulation of sequestering of calcium ion"/>
    <property type="evidence" value="ECO:0000318"/>
    <property type="project" value="GO_Central"/>
</dbReference>
<dbReference type="GO" id="GO:0001755">
    <property type="term" value="P:neural crest cell migration"/>
    <property type="evidence" value="ECO:0000315"/>
    <property type="project" value="CACAO"/>
</dbReference>
<dbReference type="FunFam" id="1.10.220.10:FF:000001">
    <property type="entry name" value="Annexin"/>
    <property type="match status" value="2"/>
</dbReference>
<dbReference type="FunFam" id="1.10.220.10:FF:000002">
    <property type="entry name" value="Annexin"/>
    <property type="match status" value="1"/>
</dbReference>
<dbReference type="FunFam" id="1.10.220.10:FF:000003">
    <property type="entry name" value="Annexin"/>
    <property type="match status" value="2"/>
</dbReference>
<dbReference type="FunFam" id="1.10.220.10:FF:000004">
    <property type="entry name" value="Annexin"/>
    <property type="match status" value="2"/>
</dbReference>
<dbReference type="FunFam" id="1.10.220.10:FF:000013">
    <property type="entry name" value="Annexin"/>
    <property type="match status" value="1"/>
</dbReference>
<dbReference type="Gene3D" id="1.10.220.10">
    <property type="entry name" value="Annexin"/>
    <property type="match status" value="8"/>
</dbReference>
<dbReference type="InterPro" id="IPR001464">
    <property type="entry name" value="Annexin"/>
</dbReference>
<dbReference type="InterPro" id="IPR018502">
    <property type="entry name" value="Annexin_repeat"/>
</dbReference>
<dbReference type="InterPro" id="IPR018252">
    <property type="entry name" value="Annexin_repeat_CS"/>
</dbReference>
<dbReference type="InterPro" id="IPR037104">
    <property type="entry name" value="Annexin_sf"/>
</dbReference>
<dbReference type="InterPro" id="IPR002393">
    <property type="entry name" value="ANX6"/>
</dbReference>
<dbReference type="PANTHER" id="PTHR10502">
    <property type="entry name" value="ANNEXIN"/>
    <property type="match status" value="1"/>
</dbReference>
<dbReference type="PANTHER" id="PTHR10502:SF19">
    <property type="entry name" value="ANNEXIN A6"/>
    <property type="match status" value="1"/>
</dbReference>
<dbReference type="Pfam" id="PF00191">
    <property type="entry name" value="Annexin"/>
    <property type="match status" value="8"/>
</dbReference>
<dbReference type="PRINTS" id="PR00196">
    <property type="entry name" value="ANNEXIN"/>
</dbReference>
<dbReference type="PRINTS" id="PR00202">
    <property type="entry name" value="ANNEXINVI"/>
</dbReference>
<dbReference type="SMART" id="SM00335">
    <property type="entry name" value="ANX"/>
    <property type="match status" value="8"/>
</dbReference>
<dbReference type="SUPFAM" id="SSF47874">
    <property type="entry name" value="Annexin"/>
    <property type="match status" value="2"/>
</dbReference>
<dbReference type="PROSITE" id="PS00223">
    <property type="entry name" value="ANNEXIN_1"/>
    <property type="match status" value="5"/>
</dbReference>
<dbReference type="PROSITE" id="PS51897">
    <property type="entry name" value="ANNEXIN_2"/>
    <property type="match status" value="8"/>
</dbReference>
<comment type="function">
    <text evidence="1">May associate with CD21. May regulate the release of Ca(2+) from intracellular stores (By similarity).</text>
</comment>
<comment type="subcellular location">
    <subcellularLocation>
        <location evidence="1">Cytoplasm</location>
    </subcellularLocation>
    <subcellularLocation>
        <location evidence="1">Melanosome</location>
    </subcellularLocation>
</comment>
<comment type="domain">
    <text>A pair of annexin repeats may form one binding site for calcium and phospholipid.</text>
</comment>
<comment type="similarity">
    <text evidence="2 3">Belongs to the annexin family.</text>
</comment>
<name>ANXA6_CHICK</name>
<sequence length="671" mass="75219">MAPKGKVYRGSVKDFPGFNASQDADALCNAMKGFGSDKDAILDLITSRSNKQRLEICQAYKSQYGKDLIADLKYELTGKFERLIVSLMRPPAYSDAKEIKDAIAGIGTDEKCLIEILASRTNQEIHDLVAAYKDAYERDLEADVVGDTSGHFKKMLVVLLQGAREEDDVVSEDLVEQDAKDLLEAGELKWGTDEAQFIYILGRRSKQHLRMVFDEYLKISGKPIERSIRAELSGDFEKLKLAVVKCVRSTAEYFAERLYKAMKGLGTRDNTLIHIMVSRSEIDMLDIREVFRTKYDKSLHNMIKEDTSGEYKKALLKLCEGDDDAAAEFFPEAAQVAYRMWELSAVAKVELRGTVQPASNFNDDGDAQVLRKAMKGLGTDEGAIIEVLTQRSNAQRQQILKAYKAHYGRDLLADLKSELSGSLANLILGLMLTPAQYDAKQLRKAVEGDGTDESTLVEIMATRNNQEIAAINEAYQQAYHKSLEDDLSSDTSVHFKRLLVSLALGNRDEGPENLTQAHEDAKVVAETLKLADVPSNDSSDSLETRFLSILCTRSYPHLRRVFQEFVKMTNHDVEHAIRKRMSGDVRDAFVAIVRSVKNKPAFFADKLYKSMKGAGTDERTLTRIMISRSEIDLLNIRGEFIDLFDKSLYQMIEKDSGDYCKALLALCGGDD</sequence>
<evidence type="ECO:0000250" key="1"/>
<evidence type="ECO:0000255" key="2">
    <source>
        <dbReference type="PROSITE-ProRule" id="PRU01245"/>
    </source>
</evidence>
<evidence type="ECO:0000305" key="3"/>
<proteinExistence type="evidence at transcript level"/>
<protein>
    <recommendedName>
        <fullName>Annexin A6</fullName>
    </recommendedName>
    <alternativeName>
        <fullName>67 kDa calelectrin</fullName>
    </alternativeName>
    <alternativeName>
        <fullName>Annexin VI</fullName>
    </alternativeName>
    <alternativeName>
        <fullName>Annexin-6</fullName>
    </alternativeName>
    <alternativeName>
        <fullName>Calphobindin-II</fullName>
        <shortName>CPB-II</shortName>
    </alternativeName>
    <alternativeName>
        <fullName>Chromobindin-20</fullName>
    </alternativeName>
    <alternativeName>
        <fullName>Lipocortin VI</fullName>
    </alternativeName>
    <alternativeName>
        <fullName>P68</fullName>
    </alternativeName>
    <alternativeName>
        <fullName>P70</fullName>
    </alternativeName>
    <alternativeName>
        <fullName>Protein III</fullName>
    </alternativeName>
</protein>
<organism>
    <name type="scientific">Gallus gallus</name>
    <name type="common">Chicken</name>
    <dbReference type="NCBI Taxonomy" id="9031"/>
    <lineage>
        <taxon>Eukaryota</taxon>
        <taxon>Metazoa</taxon>
        <taxon>Chordata</taxon>
        <taxon>Craniata</taxon>
        <taxon>Vertebrata</taxon>
        <taxon>Euteleostomi</taxon>
        <taxon>Archelosauria</taxon>
        <taxon>Archosauria</taxon>
        <taxon>Dinosauria</taxon>
        <taxon>Saurischia</taxon>
        <taxon>Theropoda</taxon>
        <taxon>Coelurosauria</taxon>
        <taxon>Aves</taxon>
        <taxon>Neognathae</taxon>
        <taxon>Galloanserae</taxon>
        <taxon>Galliformes</taxon>
        <taxon>Phasianidae</taxon>
        <taxon>Phasianinae</taxon>
        <taxon>Gallus</taxon>
    </lineage>
</organism>
<gene>
    <name type="primary">ANXA6</name>
    <name type="synonym">ANX6</name>
</gene>